<evidence type="ECO:0000255" key="1">
    <source>
        <dbReference type="HAMAP-Rule" id="MF_00158"/>
    </source>
</evidence>
<dbReference type="EC" id="6.3.2.1" evidence="1"/>
<dbReference type="EMBL" id="CP000383">
    <property type="protein sequence ID" value="ABG61067.1"/>
    <property type="molecule type" value="Genomic_DNA"/>
</dbReference>
<dbReference type="RefSeq" id="WP_011587172.1">
    <property type="nucleotide sequence ID" value="NC_008255.1"/>
</dbReference>
<dbReference type="SMR" id="Q11NE6"/>
<dbReference type="STRING" id="269798.CHU_3835"/>
<dbReference type="KEGG" id="chu:CHU_3835"/>
<dbReference type="eggNOG" id="COG0414">
    <property type="taxonomic scope" value="Bacteria"/>
</dbReference>
<dbReference type="HOGENOM" id="CLU_047148_0_0_10"/>
<dbReference type="OrthoDB" id="9773087at2"/>
<dbReference type="UniPathway" id="UPA00028">
    <property type="reaction ID" value="UER00005"/>
</dbReference>
<dbReference type="Proteomes" id="UP000001822">
    <property type="component" value="Chromosome"/>
</dbReference>
<dbReference type="GO" id="GO:0005829">
    <property type="term" value="C:cytosol"/>
    <property type="evidence" value="ECO:0007669"/>
    <property type="project" value="TreeGrafter"/>
</dbReference>
<dbReference type="GO" id="GO:0005524">
    <property type="term" value="F:ATP binding"/>
    <property type="evidence" value="ECO:0007669"/>
    <property type="project" value="UniProtKB-KW"/>
</dbReference>
<dbReference type="GO" id="GO:0004592">
    <property type="term" value="F:pantoate-beta-alanine ligase activity"/>
    <property type="evidence" value="ECO:0007669"/>
    <property type="project" value="UniProtKB-UniRule"/>
</dbReference>
<dbReference type="GO" id="GO:0015940">
    <property type="term" value="P:pantothenate biosynthetic process"/>
    <property type="evidence" value="ECO:0007669"/>
    <property type="project" value="UniProtKB-UniRule"/>
</dbReference>
<dbReference type="CDD" id="cd00560">
    <property type="entry name" value="PanC"/>
    <property type="match status" value="1"/>
</dbReference>
<dbReference type="FunFam" id="3.40.50.620:FF:000013">
    <property type="entry name" value="Pantothenate synthetase"/>
    <property type="match status" value="1"/>
</dbReference>
<dbReference type="Gene3D" id="3.40.50.620">
    <property type="entry name" value="HUPs"/>
    <property type="match status" value="1"/>
</dbReference>
<dbReference type="Gene3D" id="3.30.1300.10">
    <property type="entry name" value="Pantoate-beta-alanine ligase, C-terminal domain"/>
    <property type="match status" value="1"/>
</dbReference>
<dbReference type="HAMAP" id="MF_00158">
    <property type="entry name" value="PanC"/>
    <property type="match status" value="1"/>
</dbReference>
<dbReference type="InterPro" id="IPR004821">
    <property type="entry name" value="Cyt_trans-like"/>
</dbReference>
<dbReference type="InterPro" id="IPR003721">
    <property type="entry name" value="Pantoate_ligase"/>
</dbReference>
<dbReference type="InterPro" id="IPR042176">
    <property type="entry name" value="Pantoate_ligase_C"/>
</dbReference>
<dbReference type="InterPro" id="IPR014729">
    <property type="entry name" value="Rossmann-like_a/b/a_fold"/>
</dbReference>
<dbReference type="NCBIfam" id="TIGR00125">
    <property type="entry name" value="cyt_tran_rel"/>
    <property type="match status" value="1"/>
</dbReference>
<dbReference type="NCBIfam" id="TIGR00018">
    <property type="entry name" value="panC"/>
    <property type="match status" value="1"/>
</dbReference>
<dbReference type="PANTHER" id="PTHR21299">
    <property type="entry name" value="CYTIDYLATE KINASE/PANTOATE-BETA-ALANINE LIGASE"/>
    <property type="match status" value="1"/>
</dbReference>
<dbReference type="PANTHER" id="PTHR21299:SF1">
    <property type="entry name" value="PANTOATE--BETA-ALANINE LIGASE"/>
    <property type="match status" value="1"/>
</dbReference>
<dbReference type="Pfam" id="PF02569">
    <property type="entry name" value="Pantoate_ligase"/>
    <property type="match status" value="1"/>
</dbReference>
<dbReference type="SUPFAM" id="SSF52374">
    <property type="entry name" value="Nucleotidylyl transferase"/>
    <property type="match status" value="1"/>
</dbReference>
<comment type="function">
    <text evidence="1">Catalyzes the condensation of pantoate with beta-alanine in an ATP-dependent reaction via a pantoyl-adenylate intermediate.</text>
</comment>
<comment type="catalytic activity">
    <reaction evidence="1">
        <text>(R)-pantoate + beta-alanine + ATP = (R)-pantothenate + AMP + diphosphate + H(+)</text>
        <dbReference type="Rhea" id="RHEA:10912"/>
        <dbReference type="ChEBI" id="CHEBI:15378"/>
        <dbReference type="ChEBI" id="CHEBI:15980"/>
        <dbReference type="ChEBI" id="CHEBI:29032"/>
        <dbReference type="ChEBI" id="CHEBI:30616"/>
        <dbReference type="ChEBI" id="CHEBI:33019"/>
        <dbReference type="ChEBI" id="CHEBI:57966"/>
        <dbReference type="ChEBI" id="CHEBI:456215"/>
        <dbReference type="EC" id="6.3.2.1"/>
    </reaction>
</comment>
<comment type="pathway">
    <text evidence="1">Cofactor biosynthesis; (R)-pantothenate biosynthesis; (R)-pantothenate from (R)-pantoate and beta-alanine: step 1/1.</text>
</comment>
<comment type="subunit">
    <text evidence="1">Homodimer.</text>
</comment>
<comment type="subcellular location">
    <subcellularLocation>
        <location evidence="1">Cytoplasm</location>
    </subcellularLocation>
</comment>
<comment type="miscellaneous">
    <text evidence="1">The reaction proceeds by a bi uni uni bi ping pong mechanism.</text>
</comment>
<comment type="similarity">
    <text evidence="1">Belongs to the pantothenate synthetase family.</text>
</comment>
<name>PANC_CYTH3</name>
<sequence length="283" mass="31546">MISITSIQQLRLHLAEEKRKNHSVGFVPTMGALHRGHISLIKQAKAENTVCVASIFVNPLQFNNPEDFNKYPIQRESDMKLMSEAGCDILFMPDVAEFYPTRPNMKIDIGLLDQILEGAHRPGHFSGVAIVVSKLFHIIEPGKAYFGQKDIQQVAVIRQLVSELNFPIEIIACPIIREESGLAMSSRNMRLSAQGKAVAANIYKALSVIEKQIKQDKVTVSDAQHAGKNYLNQFKEIEVEYLEIVAADTLEAITEYADQTKIAVCIAAYVEGVRLIDNLVIIL</sequence>
<proteinExistence type="inferred from homology"/>
<protein>
    <recommendedName>
        <fullName evidence="1">Pantothenate synthetase</fullName>
        <shortName evidence="1">PS</shortName>
        <ecNumber evidence="1">6.3.2.1</ecNumber>
    </recommendedName>
    <alternativeName>
        <fullName evidence="1">Pantoate--beta-alanine ligase</fullName>
    </alternativeName>
    <alternativeName>
        <fullName evidence="1">Pantoate-activating enzyme</fullName>
    </alternativeName>
</protein>
<reference key="1">
    <citation type="journal article" date="2007" name="Appl. Environ. Microbiol.">
        <title>Genome sequence of the cellulolytic gliding bacterium Cytophaga hutchinsonii.</title>
        <authorList>
            <person name="Xie G."/>
            <person name="Bruce D.C."/>
            <person name="Challacombe J.F."/>
            <person name="Chertkov O."/>
            <person name="Detter J.C."/>
            <person name="Gilna P."/>
            <person name="Han C.S."/>
            <person name="Lucas S."/>
            <person name="Misra M."/>
            <person name="Myers G.L."/>
            <person name="Richardson P."/>
            <person name="Tapia R."/>
            <person name="Thayer N."/>
            <person name="Thompson L.S."/>
            <person name="Brettin T.S."/>
            <person name="Henrissat B."/>
            <person name="Wilson D.B."/>
            <person name="McBride M.J."/>
        </authorList>
    </citation>
    <scope>NUCLEOTIDE SEQUENCE [LARGE SCALE GENOMIC DNA]</scope>
    <source>
        <strain>ATCC 33406 / DSM 1761 / JCM 20678 / CIP 103989 / IAM 12607 / NBRC 15051 / NCIMB 9469 / D465</strain>
    </source>
</reference>
<feature type="chain" id="PRO_0000305433" description="Pantothenate synthetase">
    <location>
        <begin position="1"/>
        <end position="283"/>
    </location>
</feature>
<feature type="active site" description="Proton donor" evidence="1">
    <location>
        <position position="37"/>
    </location>
</feature>
<feature type="binding site" evidence="1">
    <location>
        <begin position="30"/>
        <end position="37"/>
    </location>
    <ligand>
        <name>ATP</name>
        <dbReference type="ChEBI" id="CHEBI:30616"/>
    </ligand>
</feature>
<feature type="binding site" evidence="1">
    <location>
        <position position="61"/>
    </location>
    <ligand>
        <name>(R)-pantoate</name>
        <dbReference type="ChEBI" id="CHEBI:15980"/>
    </ligand>
</feature>
<feature type="binding site" evidence="1">
    <location>
        <position position="61"/>
    </location>
    <ligand>
        <name>beta-alanine</name>
        <dbReference type="ChEBI" id="CHEBI:57966"/>
    </ligand>
</feature>
<feature type="binding site" evidence="1">
    <location>
        <begin position="147"/>
        <end position="150"/>
    </location>
    <ligand>
        <name>ATP</name>
        <dbReference type="ChEBI" id="CHEBI:30616"/>
    </ligand>
</feature>
<feature type="binding site" evidence="1">
    <location>
        <position position="153"/>
    </location>
    <ligand>
        <name>(R)-pantoate</name>
        <dbReference type="ChEBI" id="CHEBI:15980"/>
    </ligand>
</feature>
<feature type="binding site" evidence="1">
    <location>
        <position position="176"/>
    </location>
    <ligand>
        <name>ATP</name>
        <dbReference type="ChEBI" id="CHEBI:30616"/>
    </ligand>
</feature>
<feature type="binding site" evidence="1">
    <location>
        <begin position="184"/>
        <end position="187"/>
    </location>
    <ligand>
        <name>ATP</name>
        <dbReference type="ChEBI" id="CHEBI:30616"/>
    </ligand>
</feature>
<organism>
    <name type="scientific">Cytophaga hutchinsonii (strain ATCC 33406 / DSM 1761 / CIP 103989 / NBRC 15051 / NCIMB 9469 / D465)</name>
    <dbReference type="NCBI Taxonomy" id="269798"/>
    <lineage>
        <taxon>Bacteria</taxon>
        <taxon>Pseudomonadati</taxon>
        <taxon>Bacteroidota</taxon>
        <taxon>Cytophagia</taxon>
        <taxon>Cytophagales</taxon>
        <taxon>Cytophagaceae</taxon>
        <taxon>Cytophaga</taxon>
    </lineage>
</organism>
<accession>Q11NE6</accession>
<keyword id="KW-0067">ATP-binding</keyword>
<keyword id="KW-0963">Cytoplasm</keyword>
<keyword id="KW-0436">Ligase</keyword>
<keyword id="KW-0547">Nucleotide-binding</keyword>
<keyword id="KW-0566">Pantothenate biosynthesis</keyword>
<keyword id="KW-1185">Reference proteome</keyword>
<gene>
    <name evidence="1" type="primary">panC</name>
    <name type="ordered locus">CHU_3835</name>
</gene>